<evidence type="ECO:0000255" key="1">
    <source>
        <dbReference type="HAMAP-Rule" id="MF_00480"/>
    </source>
</evidence>
<evidence type="ECO:0000305" key="2"/>
<accession>B4TXE9</accession>
<comment type="function">
    <text evidence="1">One of the primary rRNA binding proteins, it binds directly to 16S rRNA where it nucleates assembly of the head domain of the 30S subunit. Is located at the subunit interface close to the decoding center, probably blocks exit of the E-site tRNA.</text>
</comment>
<comment type="subunit">
    <text evidence="1">Part of the 30S ribosomal subunit. Contacts proteins S9 and S11.</text>
</comment>
<comment type="similarity">
    <text evidence="1">Belongs to the universal ribosomal protein uS7 family.</text>
</comment>
<dbReference type="EMBL" id="CP001127">
    <property type="protein sequence ID" value="ACF89761.1"/>
    <property type="molecule type" value="Genomic_DNA"/>
</dbReference>
<dbReference type="RefSeq" id="WP_001138043.1">
    <property type="nucleotide sequence ID" value="NC_011094.1"/>
</dbReference>
<dbReference type="SMR" id="B4TXE9"/>
<dbReference type="GeneID" id="93778657"/>
<dbReference type="KEGG" id="sew:SeSA_A3643"/>
<dbReference type="HOGENOM" id="CLU_072226_1_1_6"/>
<dbReference type="Proteomes" id="UP000001865">
    <property type="component" value="Chromosome"/>
</dbReference>
<dbReference type="GO" id="GO:0015935">
    <property type="term" value="C:small ribosomal subunit"/>
    <property type="evidence" value="ECO:0007669"/>
    <property type="project" value="InterPro"/>
</dbReference>
<dbReference type="GO" id="GO:0019843">
    <property type="term" value="F:rRNA binding"/>
    <property type="evidence" value="ECO:0007669"/>
    <property type="project" value="UniProtKB-UniRule"/>
</dbReference>
<dbReference type="GO" id="GO:0003735">
    <property type="term" value="F:structural constituent of ribosome"/>
    <property type="evidence" value="ECO:0007669"/>
    <property type="project" value="InterPro"/>
</dbReference>
<dbReference type="GO" id="GO:0000049">
    <property type="term" value="F:tRNA binding"/>
    <property type="evidence" value="ECO:0007669"/>
    <property type="project" value="UniProtKB-UniRule"/>
</dbReference>
<dbReference type="GO" id="GO:0006412">
    <property type="term" value="P:translation"/>
    <property type="evidence" value="ECO:0007669"/>
    <property type="project" value="UniProtKB-UniRule"/>
</dbReference>
<dbReference type="CDD" id="cd14869">
    <property type="entry name" value="uS7_Bacteria"/>
    <property type="match status" value="1"/>
</dbReference>
<dbReference type="FunFam" id="1.10.455.10:FF:000001">
    <property type="entry name" value="30S ribosomal protein S7"/>
    <property type="match status" value="1"/>
</dbReference>
<dbReference type="Gene3D" id="1.10.455.10">
    <property type="entry name" value="Ribosomal protein S7 domain"/>
    <property type="match status" value="1"/>
</dbReference>
<dbReference type="HAMAP" id="MF_00480_B">
    <property type="entry name" value="Ribosomal_uS7_B"/>
    <property type="match status" value="1"/>
</dbReference>
<dbReference type="InterPro" id="IPR000235">
    <property type="entry name" value="Ribosomal_uS7"/>
</dbReference>
<dbReference type="InterPro" id="IPR005717">
    <property type="entry name" value="Ribosomal_uS7_bac/org-type"/>
</dbReference>
<dbReference type="InterPro" id="IPR020606">
    <property type="entry name" value="Ribosomal_uS7_CS"/>
</dbReference>
<dbReference type="InterPro" id="IPR023798">
    <property type="entry name" value="Ribosomal_uS7_dom"/>
</dbReference>
<dbReference type="InterPro" id="IPR036823">
    <property type="entry name" value="Ribosomal_uS7_dom_sf"/>
</dbReference>
<dbReference type="NCBIfam" id="TIGR01029">
    <property type="entry name" value="rpsG_bact"/>
    <property type="match status" value="1"/>
</dbReference>
<dbReference type="PANTHER" id="PTHR11205">
    <property type="entry name" value="RIBOSOMAL PROTEIN S7"/>
    <property type="match status" value="1"/>
</dbReference>
<dbReference type="Pfam" id="PF00177">
    <property type="entry name" value="Ribosomal_S7"/>
    <property type="match status" value="1"/>
</dbReference>
<dbReference type="PIRSF" id="PIRSF002122">
    <property type="entry name" value="RPS7p_RPS7a_RPS5e_RPS7o"/>
    <property type="match status" value="1"/>
</dbReference>
<dbReference type="SUPFAM" id="SSF47973">
    <property type="entry name" value="Ribosomal protein S7"/>
    <property type="match status" value="1"/>
</dbReference>
<dbReference type="PROSITE" id="PS00052">
    <property type="entry name" value="RIBOSOMAL_S7"/>
    <property type="match status" value="1"/>
</dbReference>
<protein>
    <recommendedName>
        <fullName evidence="1">Small ribosomal subunit protein uS7</fullName>
    </recommendedName>
    <alternativeName>
        <fullName evidence="2">30S ribosomal protein S7</fullName>
    </alternativeName>
</protein>
<proteinExistence type="inferred from homology"/>
<gene>
    <name evidence="1" type="primary">rpsG</name>
    <name type="ordered locus">SeSA_A3643</name>
</gene>
<keyword id="KW-0687">Ribonucleoprotein</keyword>
<keyword id="KW-0689">Ribosomal protein</keyword>
<keyword id="KW-0694">RNA-binding</keyword>
<keyword id="KW-0699">rRNA-binding</keyword>
<keyword id="KW-0820">tRNA-binding</keyword>
<feature type="chain" id="PRO_1000126000" description="Small ribosomal subunit protein uS7">
    <location>
        <begin position="1"/>
        <end position="156"/>
    </location>
</feature>
<sequence>MPRRRVIGQRKILPDPKFGSELLAKFVNILMVDGKKSTAESIVYSALETLAQRSGKSELEAFEVALENVRPTVEVKSRRVGGSTYQVPVEVRPVRRNALAMRWIVEAARKRGDKSMALRLANELSDAAENKGTAVKKREDVHRMAEANKAFAHYRW</sequence>
<name>RS7_SALSV</name>
<reference key="1">
    <citation type="journal article" date="2011" name="J. Bacteriol.">
        <title>Comparative genomics of 28 Salmonella enterica isolates: evidence for CRISPR-mediated adaptive sublineage evolution.</title>
        <authorList>
            <person name="Fricke W.F."/>
            <person name="Mammel M.K."/>
            <person name="McDermott P.F."/>
            <person name="Tartera C."/>
            <person name="White D.G."/>
            <person name="Leclerc J.E."/>
            <person name="Ravel J."/>
            <person name="Cebula T.A."/>
        </authorList>
    </citation>
    <scope>NUCLEOTIDE SEQUENCE [LARGE SCALE GENOMIC DNA]</scope>
    <source>
        <strain>CVM19633</strain>
    </source>
</reference>
<organism>
    <name type="scientific">Salmonella schwarzengrund (strain CVM19633)</name>
    <dbReference type="NCBI Taxonomy" id="439843"/>
    <lineage>
        <taxon>Bacteria</taxon>
        <taxon>Pseudomonadati</taxon>
        <taxon>Pseudomonadota</taxon>
        <taxon>Gammaproteobacteria</taxon>
        <taxon>Enterobacterales</taxon>
        <taxon>Enterobacteriaceae</taxon>
        <taxon>Salmonella</taxon>
    </lineage>
</organism>